<accession>Q80X85</accession>
<accession>Q3TSI9</accession>
<accession>Q9CV71</accession>
<dbReference type="EMBL" id="AK009251">
    <property type="protein sequence ID" value="BAB26169.1"/>
    <property type="molecule type" value="mRNA"/>
</dbReference>
<dbReference type="EMBL" id="AK131937">
    <property type="protein sequence ID" value="BAE20885.1"/>
    <property type="molecule type" value="mRNA"/>
</dbReference>
<dbReference type="EMBL" id="AK162024">
    <property type="protein sequence ID" value="BAE36686.1"/>
    <property type="molecule type" value="mRNA"/>
</dbReference>
<dbReference type="EMBL" id="BC049636">
    <property type="protein sequence ID" value="AAH49636.1"/>
    <property type="molecule type" value="mRNA"/>
</dbReference>
<dbReference type="CCDS" id="CCDS25642.1"/>
<dbReference type="RefSeq" id="NP_079581.1">
    <property type="nucleotide sequence ID" value="NM_025305.3"/>
</dbReference>
<dbReference type="PDB" id="7PNT">
    <property type="method" value="EM"/>
    <property type="resolution" value="3.19 A"/>
    <property type="chains" value="F=1-242"/>
</dbReference>
<dbReference type="PDB" id="7PNU">
    <property type="method" value="EM"/>
    <property type="resolution" value="3.06 A"/>
    <property type="chains" value="F=1-242"/>
</dbReference>
<dbReference type="PDB" id="7PNV">
    <property type="method" value="EM"/>
    <property type="resolution" value="3.06 A"/>
    <property type="chains" value="F=1-242"/>
</dbReference>
<dbReference type="PDB" id="7PNW">
    <property type="method" value="EM"/>
    <property type="resolution" value="3.09 A"/>
    <property type="chains" value="F=1-242"/>
</dbReference>
<dbReference type="PDBsum" id="7PNT"/>
<dbReference type="PDBsum" id="7PNU"/>
<dbReference type="PDBsum" id="7PNV"/>
<dbReference type="PDBsum" id="7PNW"/>
<dbReference type="EMDB" id="EMD-13551"/>
<dbReference type="EMDB" id="EMD-13552"/>
<dbReference type="EMDB" id="EMD-13553"/>
<dbReference type="EMDB" id="EMD-13554"/>
<dbReference type="SMR" id="Q80X85"/>
<dbReference type="BioGRID" id="206055">
    <property type="interactions" value="10"/>
</dbReference>
<dbReference type="ComplexPortal" id="CPX-5301">
    <property type="entry name" value="28S mitochondrial small ribosomal subunit"/>
</dbReference>
<dbReference type="FunCoup" id="Q80X85">
    <property type="interactions" value="1446"/>
</dbReference>
<dbReference type="STRING" id="10090.ENSMUSP00000053033"/>
<dbReference type="iPTMnet" id="Q80X85"/>
<dbReference type="PhosphoSitePlus" id="Q80X85"/>
<dbReference type="PaxDb" id="10090-ENSMUSP00000053033"/>
<dbReference type="PeptideAtlas" id="Q80X85"/>
<dbReference type="ProteomicsDB" id="256795"/>
<dbReference type="Pumba" id="Q80X85"/>
<dbReference type="Antibodypedia" id="19534">
    <property type="antibodies" value="136 antibodies from 20 providers"/>
</dbReference>
<dbReference type="DNASU" id="50529"/>
<dbReference type="Ensembl" id="ENSMUST00000058109.9">
    <property type="protein sequence ID" value="ENSMUSP00000053033.9"/>
    <property type="gene ID" value="ENSMUSG00000046756.11"/>
</dbReference>
<dbReference type="GeneID" id="50529"/>
<dbReference type="KEGG" id="mmu:50529"/>
<dbReference type="UCSC" id="uc007mia.1">
    <property type="organism name" value="mouse"/>
</dbReference>
<dbReference type="AGR" id="MGI:1354367"/>
<dbReference type="CTD" id="51081"/>
<dbReference type="MGI" id="MGI:1354367">
    <property type="gene designation" value="Mrps7"/>
</dbReference>
<dbReference type="VEuPathDB" id="HostDB:ENSMUSG00000046756"/>
<dbReference type="eggNOG" id="KOG3291">
    <property type="taxonomic scope" value="Eukaryota"/>
</dbReference>
<dbReference type="GeneTree" id="ENSGT00390000014620"/>
<dbReference type="HOGENOM" id="CLU_072226_0_1_1"/>
<dbReference type="InParanoid" id="Q80X85"/>
<dbReference type="OMA" id="HELHKQC"/>
<dbReference type="OrthoDB" id="9972728at2759"/>
<dbReference type="PhylomeDB" id="Q80X85"/>
<dbReference type="TreeFam" id="TF105978"/>
<dbReference type="Reactome" id="R-MMU-5389840">
    <property type="pathway name" value="Mitochondrial translation elongation"/>
</dbReference>
<dbReference type="Reactome" id="R-MMU-5419276">
    <property type="pathway name" value="Mitochondrial translation termination"/>
</dbReference>
<dbReference type="BioGRID-ORCS" id="50529">
    <property type="hits" value="21 hits in 76 CRISPR screens"/>
</dbReference>
<dbReference type="ChiTaRS" id="Mrps7">
    <property type="organism name" value="mouse"/>
</dbReference>
<dbReference type="PRO" id="PR:Q80X85"/>
<dbReference type="Proteomes" id="UP000000589">
    <property type="component" value="Chromosome 11"/>
</dbReference>
<dbReference type="RNAct" id="Q80X85">
    <property type="molecule type" value="protein"/>
</dbReference>
<dbReference type="Bgee" id="ENSMUSG00000046756">
    <property type="expression patterns" value="Expressed in ectoplacental cone and 267 other cell types or tissues"/>
</dbReference>
<dbReference type="GO" id="GO:0005743">
    <property type="term" value="C:mitochondrial inner membrane"/>
    <property type="evidence" value="ECO:0000303"/>
    <property type="project" value="ComplexPortal"/>
</dbReference>
<dbReference type="GO" id="GO:0005763">
    <property type="term" value="C:mitochondrial small ribosomal subunit"/>
    <property type="evidence" value="ECO:0000250"/>
    <property type="project" value="UniProtKB"/>
</dbReference>
<dbReference type="GO" id="GO:0005739">
    <property type="term" value="C:mitochondrion"/>
    <property type="evidence" value="ECO:0007005"/>
    <property type="project" value="MGI"/>
</dbReference>
<dbReference type="GO" id="GO:0003735">
    <property type="term" value="F:structural constituent of ribosome"/>
    <property type="evidence" value="ECO:0000250"/>
    <property type="project" value="UniProtKB"/>
</dbReference>
<dbReference type="GO" id="GO:0032543">
    <property type="term" value="P:mitochondrial translation"/>
    <property type="evidence" value="ECO:0000250"/>
    <property type="project" value="UniProtKB"/>
</dbReference>
<dbReference type="GO" id="GO:0006412">
    <property type="term" value="P:translation"/>
    <property type="evidence" value="ECO:0000247"/>
    <property type="project" value="MGI"/>
</dbReference>
<dbReference type="CDD" id="cd14870">
    <property type="entry name" value="uS7_Mitochondria_Mammalian"/>
    <property type="match status" value="1"/>
</dbReference>
<dbReference type="FunFam" id="1.10.455.10:FF:000004">
    <property type="entry name" value="28S ribosomal protein S7, mitochondrial"/>
    <property type="match status" value="1"/>
</dbReference>
<dbReference type="Gene3D" id="1.10.455.10">
    <property type="entry name" value="Ribosomal protein S7 domain"/>
    <property type="match status" value="1"/>
</dbReference>
<dbReference type="InterPro" id="IPR000235">
    <property type="entry name" value="Ribosomal_uS7"/>
</dbReference>
<dbReference type="InterPro" id="IPR023798">
    <property type="entry name" value="Ribosomal_uS7_dom"/>
</dbReference>
<dbReference type="InterPro" id="IPR036823">
    <property type="entry name" value="Ribosomal_uS7_dom_sf"/>
</dbReference>
<dbReference type="PANTHER" id="PTHR11205">
    <property type="entry name" value="RIBOSOMAL PROTEIN S7"/>
    <property type="match status" value="1"/>
</dbReference>
<dbReference type="Pfam" id="PF00177">
    <property type="entry name" value="Ribosomal_S7"/>
    <property type="match status" value="1"/>
</dbReference>
<dbReference type="SUPFAM" id="SSF47973">
    <property type="entry name" value="Ribosomal protein S7"/>
    <property type="match status" value="1"/>
</dbReference>
<comment type="subunit">
    <text evidence="1">Component of the mitochondrial ribosome small subunit (28S) which comprises a 12S rRNA and about 30 distinct proteins.</text>
</comment>
<comment type="subcellular location">
    <subcellularLocation>
        <location evidence="1">Mitochondrion</location>
    </subcellularLocation>
</comment>
<comment type="similarity">
    <text evidence="4">Belongs to the universal ribosomal protein uS7 family.</text>
</comment>
<gene>
    <name type="primary">Mrps7</name>
</gene>
<evidence type="ECO:0000250" key="1">
    <source>
        <dbReference type="UniProtKB" id="Q3T040"/>
    </source>
</evidence>
<evidence type="ECO:0000250" key="2">
    <source>
        <dbReference type="UniProtKB" id="Q9Y2R9"/>
    </source>
</evidence>
<evidence type="ECO:0000255" key="3"/>
<evidence type="ECO:0000305" key="4"/>
<feature type="transit peptide" description="Mitochondrion" evidence="3">
    <location>
        <begin position="1"/>
        <end position="37"/>
    </location>
</feature>
<feature type="chain" id="PRO_0000273057" description="Small ribosomal subunit protein uS7m">
    <location>
        <begin position="38"/>
        <end position="242"/>
    </location>
</feature>
<feature type="modified residue" description="N6-acetyllysine" evidence="2">
    <location>
        <position position="228"/>
    </location>
</feature>
<sequence length="242" mass="28063">MAAPALRAPLRWSGLALGVRCAVWNLPGLTQVRGSRYAPEFREPLIDKEYYRKPVAELTEEEKYDQELKKTQFIKAAAATETSSVFADPVISKFTNMMMKGGNKVLARSLMAQTLEAVKRKQFEKYRAASAEEQATIERNPYRIFHEALKNCEPVIGLVPILKGGHFYQVPVPLADRRRRFLAMKWMITECRENKPRRTLMPEKLSHELLEAFHNRGPVIKRKHNMHKMAEANRALAHYRWW</sequence>
<name>RT07_MOUSE</name>
<organism>
    <name type="scientific">Mus musculus</name>
    <name type="common">Mouse</name>
    <dbReference type="NCBI Taxonomy" id="10090"/>
    <lineage>
        <taxon>Eukaryota</taxon>
        <taxon>Metazoa</taxon>
        <taxon>Chordata</taxon>
        <taxon>Craniata</taxon>
        <taxon>Vertebrata</taxon>
        <taxon>Euteleostomi</taxon>
        <taxon>Mammalia</taxon>
        <taxon>Eutheria</taxon>
        <taxon>Euarchontoglires</taxon>
        <taxon>Glires</taxon>
        <taxon>Rodentia</taxon>
        <taxon>Myomorpha</taxon>
        <taxon>Muroidea</taxon>
        <taxon>Muridae</taxon>
        <taxon>Murinae</taxon>
        <taxon>Mus</taxon>
        <taxon>Mus</taxon>
    </lineage>
</organism>
<reference key="1">
    <citation type="journal article" date="2005" name="Science">
        <title>The transcriptional landscape of the mammalian genome.</title>
        <authorList>
            <person name="Carninci P."/>
            <person name="Kasukawa T."/>
            <person name="Katayama S."/>
            <person name="Gough J."/>
            <person name="Frith M.C."/>
            <person name="Maeda N."/>
            <person name="Oyama R."/>
            <person name="Ravasi T."/>
            <person name="Lenhard B."/>
            <person name="Wells C."/>
            <person name="Kodzius R."/>
            <person name="Shimokawa K."/>
            <person name="Bajic V.B."/>
            <person name="Brenner S.E."/>
            <person name="Batalov S."/>
            <person name="Forrest A.R."/>
            <person name="Zavolan M."/>
            <person name="Davis M.J."/>
            <person name="Wilming L.G."/>
            <person name="Aidinis V."/>
            <person name="Allen J.E."/>
            <person name="Ambesi-Impiombato A."/>
            <person name="Apweiler R."/>
            <person name="Aturaliya R.N."/>
            <person name="Bailey T.L."/>
            <person name="Bansal M."/>
            <person name="Baxter L."/>
            <person name="Beisel K.W."/>
            <person name="Bersano T."/>
            <person name="Bono H."/>
            <person name="Chalk A.M."/>
            <person name="Chiu K.P."/>
            <person name="Choudhary V."/>
            <person name="Christoffels A."/>
            <person name="Clutterbuck D.R."/>
            <person name="Crowe M.L."/>
            <person name="Dalla E."/>
            <person name="Dalrymple B.P."/>
            <person name="de Bono B."/>
            <person name="Della Gatta G."/>
            <person name="di Bernardo D."/>
            <person name="Down T."/>
            <person name="Engstrom P."/>
            <person name="Fagiolini M."/>
            <person name="Faulkner G."/>
            <person name="Fletcher C.F."/>
            <person name="Fukushima T."/>
            <person name="Furuno M."/>
            <person name="Futaki S."/>
            <person name="Gariboldi M."/>
            <person name="Georgii-Hemming P."/>
            <person name="Gingeras T.R."/>
            <person name="Gojobori T."/>
            <person name="Green R.E."/>
            <person name="Gustincich S."/>
            <person name="Harbers M."/>
            <person name="Hayashi Y."/>
            <person name="Hensch T.K."/>
            <person name="Hirokawa N."/>
            <person name="Hill D."/>
            <person name="Huminiecki L."/>
            <person name="Iacono M."/>
            <person name="Ikeo K."/>
            <person name="Iwama A."/>
            <person name="Ishikawa T."/>
            <person name="Jakt M."/>
            <person name="Kanapin A."/>
            <person name="Katoh M."/>
            <person name="Kawasawa Y."/>
            <person name="Kelso J."/>
            <person name="Kitamura H."/>
            <person name="Kitano H."/>
            <person name="Kollias G."/>
            <person name="Krishnan S.P."/>
            <person name="Kruger A."/>
            <person name="Kummerfeld S.K."/>
            <person name="Kurochkin I.V."/>
            <person name="Lareau L.F."/>
            <person name="Lazarevic D."/>
            <person name="Lipovich L."/>
            <person name="Liu J."/>
            <person name="Liuni S."/>
            <person name="McWilliam S."/>
            <person name="Madan Babu M."/>
            <person name="Madera M."/>
            <person name="Marchionni L."/>
            <person name="Matsuda H."/>
            <person name="Matsuzawa S."/>
            <person name="Miki H."/>
            <person name="Mignone F."/>
            <person name="Miyake S."/>
            <person name="Morris K."/>
            <person name="Mottagui-Tabar S."/>
            <person name="Mulder N."/>
            <person name="Nakano N."/>
            <person name="Nakauchi H."/>
            <person name="Ng P."/>
            <person name="Nilsson R."/>
            <person name="Nishiguchi S."/>
            <person name="Nishikawa S."/>
            <person name="Nori F."/>
            <person name="Ohara O."/>
            <person name="Okazaki Y."/>
            <person name="Orlando V."/>
            <person name="Pang K.C."/>
            <person name="Pavan W.J."/>
            <person name="Pavesi G."/>
            <person name="Pesole G."/>
            <person name="Petrovsky N."/>
            <person name="Piazza S."/>
            <person name="Reed J."/>
            <person name="Reid J.F."/>
            <person name="Ring B.Z."/>
            <person name="Ringwald M."/>
            <person name="Rost B."/>
            <person name="Ruan Y."/>
            <person name="Salzberg S.L."/>
            <person name="Sandelin A."/>
            <person name="Schneider C."/>
            <person name="Schoenbach C."/>
            <person name="Sekiguchi K."/>
            <person name="Semple C.A."/>
            <person name="Seno S."/>
            <person name="Sessa L."/>
            <person name="Sheng Y."/>
            <person name="Shibata Y."/>
            <person name="Shimada H."/>
            <person name="Shimada K."/>
            <person name="Silva D."/>
            <person name="Sinclair B."/>
            <person name="Sperling S."/>
            <person name="Stupka E."/>
            <person name="Sugiura K."/>
            <person name="Sultana R."/>
            <person name="Takenaka Y."/>
            <person name="Taki K."/>
            <person name="Tammoja K."/>
            <person name="Tan S.L."/>
            <person name="Tang S."/>
            <person name="Taylor M.S."/>
            <person name="Tegner J."/>
            <person name="Teichmann S.A."/>
            <person name="Ueda H.R."/>
            <person name="van Nimwegen E."/>
            <person name="Verardo R."/>
            <person name="Wei C.L."/>
            <person name="Yagi K."/>
            <person name="Yamanishi H."/>
            <person name="Zabarovsky E."/>
            <person name="Zhu S."/>
            <person name="Zimmer A."/>
            <person name="Hide W."/>
            <person name="Bult C."/>
            <person name="Grimmond S.M."/>
            <person name="Teasdale R.D."/>
            <person name="Liu E.T."/>
            <person name="Brusic V."/>
            <person name="Quackenbush J."/>
            <person name="Wahlestedt C."/>
            <person name="Mattick J.S."/>
            <person name="Hume D.A."/>
            <person name="Kai C."/>
            <person name="Sasaki D."/>
            <person name="Tomaru Y."/>
            <person name="Fukuda S."/>
            <person name="Kanamori-Katayama M."/>
            <person name="Suzuki M."/>
            <person name="Aoki J."/>
            <person name="Arakawa T."/>
            <person name="Iida J."/>
            <person name="Imamura K."/>
            <person name="Itoh M."/>
            <person name="Kato T."/>
            <person name="Kawaji H."/>
            <person name="Kawagashira N."/>
            <person name="Kawashima T."/>
            <person name="Kojima M."/>
            <person name="Kondo S."/>
            <person name="Konno H."/>
            <person name="Nakano K."/>
            <person name="Ninomiya N."/>
            <person name="Nishio T."/>
            <person name="Okada M."/>
            <person name="Plessy C."/>
            <person name="Shibata K."/>
            <person name="Shiraki T."/>
            <person name="Suzuki S."/>
            <person name="Tagami M."/>
            <person name="Waki K."/>
            <person name="Watahiki A."/>
            <person name="Okamura-Oho Y."/>
            <person name="Suzuki H."/>
            <person name="Kawai J."/>
            <person name="Hayashizaki Y."/>
        </authorList>
    </citation>
    <scope>NUCLEOTIDE SEQUENCE [LARGE SCALE MRNA]</scope>
    <source>
        <strain>C57BL/6J</strain>
        <tissue>Muellerian duct</tissue>
        <tissue>Tongue</tissue>
    </source>
</reference>
<reference key="2">
    <citation type="journal article" date="2004" name="Genome Res.">
        <title>The status, quality, and expansion of the NIH full-length cDNA project: the Mammalian Gene Collection (MGC).</title>
        <authorList>
            <consortium name="The MGC Project Team"/>
        </authorList>
    </citation>
    <scope>NUCLEOTIDE SEQUENCE [LARGE SCALE MRNA]</scope>
    <source>
        <tissue>Brain</tissue>
    </source>
</reference>
<reference key="3">
    <citation type="journal article" date="2010" name="Cell">
        <title>A tissue-specific atlas of mouse protein phosphorylation and expression.</title>
        <authorList>
            <person name="Huttlin E.L."/>
            <person name="Jedrychowski M.P."/>
            <person name="Elias J.E."/>
            <person name="Goswami T."/>
            <person name="Rad R."/>
            <person name="Beausoleil S.A."/>
            <person name="Villen J."/>
            <person name="Haas W."/>
            <person name="Sowa M.E."/>
            <person name="Gygi S.P."/>
        </authorList>
    </citation>
    <scope>IDENTIFICATION BY MASS SPECTROMETRY [LARGE SCALE ANALYSIS]</scope>
    <source>
        <tissue>Brain</tissue>
        <tissue>Brown adipose tissue</tissue>
        <tissue>Heart</tissue>
        <tissue>Kidney</tissue>
        <tissue>Liver</tissue>
        <tissue>Lung</tissue>
        <tissue>Pancreas</tissue>
        <tissue>Spleen</tissue>
        <tissue>Testis</tissue>
    </source>
</reference>
<proteinExistence type="evidence at protein level"/>
<keyword id="KW-0002">3D-structure</keyword>
<keyword id="KW-0007">Acetylation</keyword>
<keyword id="KW-0496">Mitochondrion</keyword>
<keyword id="KW-1185">Reference proteome</keyword>
<keyword id="KW-0687">Ribonucleoprotein</keyword>
<keyword id="KW-0689">Ribosomal protein</keyword>
<keyword id="KW-0809">Transit peptide</keyword>
<protein>
    <recommendedName>
        <fullName evidence="4">Small ribosomal subunit protein uS7m</fullName>
    </recommendedName>
    <alternativeName>
        <fullName>28S ribosomal protein S7, mitochondrial</fullName>
        <shortName>MRP-S7</shortName>
        <shortName>S7mt</shortName>
    </alternativeName>
</protein>